<accession>Q81FN7</accession>
<sequence>MKTKTDFLKMKEQGEPITMLTAYDYPSAKLAEEAEVDMILVGDSLGMVVLGYDSTVPVTVEDMIHHTKAVRRGAKETFIVTDMPFMSYHVSLQETMVNARRIVQESGAHALKVEGAGEVISTIQYLTNAGIPVVAHLGLTPQSVGVLGGYKVQGKDAESAKKLIEDAKKCEEAGAIALVLECVPMQLAELISEQLTIPTIGIGAGQKVDGQVLVYHDLISYGVNRVPKFVKQYTSVQEEIVRGISQYVTEVKTRQFPEEKHSFTMKEEECLSLYGGKQ</sequence>
<protein>
    <recommendedName>
        <fullName evidence="1">3-methyl-2-oxobutanoate hydroxymethyltransferase</fullName>
        <ecNumber evidence="1">2.1.2.11</ecNumber>
    </recommendedName>
    <alternativeName>
        <fullName evidence="1">Ketopantoate hydroxymethyltransferase</fullName>
        <shortName evidence="1">KPHMT</shortName>
    </alternativeName>
</protein>
<name>PANB_BACCR</name>
<evidence type="ECO:0000255" key="1">
    <source>
        <dbReference type="HAMAP-Rule" id="MF_00156"/>
    </source>
</evidence>
<reference key="1">
    <citation type="journal article" date="2003" name="Nature">
        <title>Genome sequence of Bacillus cereus and comparative analysis with Bacillus anthracis.</title>
        <authorList>
            <person name="Ivanova N."/>
            <person name="Sorokin A."/>
            <person name="Anderson I."/>
            <person name="Galleron N."/>
            <person name="Candelon B."/>
            <person name="Kapatral V."/>
            <person name="Bhattacharyya A."/>
            <person name="Reznik G."/>
            <person name="Mikhailova N."/>
            <person name="Lapidus A."/>
            <person name="Chu L."/>
            <person name="Mazur M."/>
            <person name="Goltsman E."/>
            <person name="Larsen N."/>
            <person name="D'Souza M."/>
            <person name="Walunas T."/>
            <person name="Grechkin Y."/>
            <person name="Pusch G."/>
            <person name="Haselkorn R."/>
            <person name="Fonstein M."/>
            <person name="Ehrlich S.D."/>
            <person name="Overbeek R."/>
            <person name="Kyrpides N.C."/>
        </authorList>
    </citation>
    <scope>NUCLEOTIDE SEQUENCE [LARGE SCALE GENOMIC DNA]</scope>
    <source>
        <strain>ATCC 14579 / DSM 31 / CCUG 7414 / JCM 2152 / NBRC 15305 / NCIMB 9373 / NCTC 2599 / NRRL B-3711</strain>
    </source>
</reference>
<keyword id="KW-0963">Cytoplasm</keyword>
<keyword id="KW-0460">Magnesium</keyword>
<keyword id="KW-0479">Metal-binding</keyword>
<keyword id="KW-0566">Pantothenate biosynthesis</keyword>
<keyword id="KW-1185">Reference proteome</keyword>
<keyword id="KW-0808">Transferase</keyword>
<organism>
    <name type="scientific">Bacillus cereus (strain ATCC 14579 / DSM 31 / CCUG 7414 / JCM 2152 / NBRC 15305 / NCIMB 9373 / NCTC 2599 / NRRL B-3711)</name>
    <dbReference type="NCBI Taxonomy" id="226900"/>
    <lineage>
        <taxon>Bacteria</taxon>
        <taxon>Bacillati</taxon>
        <taxon>Bacillota</taxon>
        <taxon>Bacilli</taxon>
        <taxon>Bacillales</taxon>
        <taxon>Bacillaceae</taxon>
        <taxon>Bacillus</taxon>
        <taxon>Bacillus cereus group</taxon>
    </lineage>
</organism>
<feature type="chain" id="PRO_0000184810" description="3-methyl-2-oxobutanoate hydroxymethyltransferase">
    <location>
        <begin position="1"/>
        <end position="278"/>
    </location>
</feature>
<feature type="active site" description="Proton acceptor" evidence="1">
    <location>
        <position position="181"/>
    </location>
</feature>
<feature type="binding site" evidence="1">
    <location>
        <begin position="43"/>
        <end position="44"/>
    </location>
    <ligand>
        <name>3-methyl-2-oxobutanoate</name>
        <dbReference type="ChEBI" id="CHEBI:11851"/>
    </ligand>
</feature>
<feature type="binding site" evidence="1">
    <location>
        <position position="43"/>
    </location>
    <ligand>
        <name>Mg(2+)</name>
        <dbReference type="ChEBI" id="CHEBI:18420"/>
    </ligand>
</feature>
<feature type="binding site" evidence="1">
    <location>
        <position position="82"/>
    </location>
    <ligand>
        <name>3-methyl-2-oxobutanoate</name>
        <dbReference type="ChEBI" id="CHEBI:11851"/>
    </ligand>
</feature>
<feature type="binding site" evidence="1">
    <location>
        <position position="82"/>
    </location>
    <ligand>
        <name>Mg(2+)</name>
        <dbReference type="ChEBI" id="CHEBI:18420"/>
    </ligand>
</feature>
<feature type="binding site" evidence="1">
    <location>
        <position position="112"/>
    </location>
    <ligand>
        <name>3-methyl-2-oxobutanoate</name>
        <dbReference type="ChEBI" id="CHEBI:11851"/>
    </ligand>
</feature>
<feature type="binding site" evidence="1">
    <location>
        <position position="114"/>
    </location>
    <ligand>
        <name>Mg(2+)</name>
        <dbReference type="ChEBI" id="CHEBI:18420"/>
    </ligand>
</feature>
<proteinExistence type="inferred from homology"/>
<gene>
    <name evidence="1" type="primary">panB</name>
    <name type="ordered locus">BC_1540</name>
</gene>
<dbReference type="EC" id="2.1.2.11" evidence="1"/>
<dbReference type="EMBL" id="AE016877">
    <property type="protein sequence ID" value="AAP08520.1"/>
    <property type="molecule type" value="Genomic_DNA"/>
</dbReference>
<dbReference type="RefSeq" id="NP_831319.1">
    <property type="nucleotide sequence ID" value="NC_004722.1"/>
</dbReference>
<dbReference type="RefSeq" id="WP_000851109.1">
    <property type="nucleotide sequence ID" value="NC_004722.1"/>
</dbReference>
<dbReference type="SMR" id="Q81FN7"/>
<dbReference type="STRING" id="226900.BC_1540"/>
<dbReference type="KEGG" id="bce:BC1540"/>
<dbReference type="PATRIC" id="fig|226900.8.peg.1516"/>
<dbReference type="HOGENOM" id="CLU_036645_1_0_9"/>
<dbReference type="UniPathway" id="UPA00028">
    <property type="reaction ID" value="UER00003"/>
</dbReference>
<dbReference type="Proteomes" id="UP000001417">
    <property type="component" value="Chromosome"/>
</dbReference>
<dbReference type="GO" id="GO:0005737">
    <property type="term" value="C:cytoplasm"/>
    <property type="evidence" value="ECO:0000318"/>
    <property type="project" value="GO_Central"/>
</dbReference>
<dbReference type="GO" id="GO:0003864">
    <property type="term" value="F:3-methyl-2-oxobutanoate hydroxymethyltransferase activity"/>
    <property type="evidence" value="ECO:0000318"/>
    <property type="project" value="GO_Central"/>
</dbReference>
<dbReference type="GO" id="GO:0000287">
    <property type="term" value="F:magnesium ion binding"/>
    <property type="evidence" value="ECO:0000318"/>
    <property type="project" value="GO_Central"/>
</dbReference>
<dbReference type="GO" id="GO:0015940">
    <property type="term" value="P:pantothenate biosynthetic process"/>
    <property type="evidence" value="ECO:0000318"/>
    <property type="project" value="GO_Central"/>
</dbReference>
<dbReference type="CDD" id="cd06557">
    <property type="entry name" value="KPHMT-like"/>
    <property type="match status" value="1"/>
</dbReference>
<dbReference type="FunFam" id="3.20.20.60:FF:000003">
    <property type="entry name" value="3-methyl-2-oxobutanoate hydroxymethyltransferase"/>
    <property type="match status" value="1"/>
</dbReference>
<dbReference type="Gene3D" id="3.20.20.60">
    <property type="entry name" value="Phosphoenolpyruvate-binding domains"/>
    <property type="match status" value="1"/>
</dbReference>
<dbReference type="HAMAP" id="MF_00156">
    <property type="entry name" value="PanB"/>
    <property type="match status" value="1"/>
</dbReference>
<dbReference type="InterPro" id="IPR003700">
    <property type="entry name" value="Pantoate_hydroxy_MeTrfase"/>
</dbReference>
<dbReference type="InterPro" id="IPR015813">
    <property type="entry name" value="Pyrv/PenolPyrv_kinase-like_dom"/>
</dbReference>
<dbReference type="InterPro" id="IPR040442">
    <property type="entry name" value="Pyrv_kinase-like_dom_sf"/>
</dbReference>
<dbReference type="NCBIfam" id="TIGR00222">
    <property type="entry name" value="panB"/>
    <property type="match status" value="1"/>
</dbReference>
<dbReference type="NCBIfam" id="NF001452">
    <property type="entry name" value="PRK00311.1"/>
    <property type="match status" value="1"/>
</dbReference>
<dbReference type="PANTHER" id="PTHR20881">
    <property type="entry name" value="3-METHYL-2-OXOBUTANOATE HYDROXYMETHYLTRANSFERASE"/>
    <property type="match status" value="1"/>
</dbReference>
<dbReference type="PANTHER" id="PTHR20881:SF0">
    <property type="entry name" value="3-METHYL-2-OXOBUTANOATE HYDROXYMETHYLTRANSFERASE"/>
    <property type="match status" value="1"/>
</dbReference>
<dbReference type="Pfam" id="PF02548">
    <property type="entry name" value="Pantoate_transf"/>
    <property type="match status" value="1"/>
</dbReference>
<dbReference type="PIRSF" id="PIRSF000388">
    <property type="entry name" value="Pantoate_hydroxy_MeTrfase"/>
    <property type="match status" value="1"/>
</dbReference>
<dbReference type="SUPFAM" id="SSF51621">
    <property type="entry name" value="Phosphoenolpyruvate/pyruvate domain"/>
    <property type="match status" value="1"/>
</dbReference>
<comment type="function">
    <text evidence="1">Catalyzes the reversible reaction in which hydroxymethyl group from 5,10-methylenetetrahydrofolate is transferred onto alpha-ketoisovalerate to form ketopantoate.</text>
</comment>
<comment type="catalytic activity">
    <reaction evidence="1">
        <text>3-methyl-2-oxobutanoate + (6R)-5,10-methylene-5,6,7,8-tetrahydrofolate + H2O = 2-dehydropantoate + (6S)-5,6,7,8-tetrahydrofolate</text>
        <dbReference type="Rhea" id="RHEA:11824"/>
        <dbReference type="ChEBI" id="CHEBI:11561"/>
        <dbReference type="ChEBI" id="CHEBI:11851"/>
        <dbReference type="ChEBI" id="CHEBI:15377"/>
        <dbReference type="ChEBI" id="CHEBI:15636"/>
        <dbReference type="ChEBI" id="CHEBI:57453"/>
        <dbReference type="EC" id="2.1.2.11"/>
    </reaction>
</comment>
<comment type="cofactor">
    <cofactor evidence="1">
        <name>Mg(2+)</name>
        <dbReference type="ChEBI" id="CHEBI:18420"/>
    </cofactor>
    <text evidence="1">Binds 1 Mg(2+) ion per subunit.</text>
</comment>
<comment type="pathway">
    <text evidence="1">Cofactor biosynthesis; (R)-pantothenate biosynthesis; (R)-pantoate from 3-methyl-2-oxobutanoate: step 1/2.</text>
</comment>
<comment type="subunit">
    <text evidence="1">Homodecamer; pentamer of dimers.</text>
</comment>
<comment type="subcellular location">
    <subcellularLocation>
        <location evidence="1">Cytoplasm</location>
    </subcellularLocation>
</comment>
<comment type="similarity">
    <text evidence="1">Belongs to the PanB family.</text>
</comment>